<proteinExistence type="inferred from homology"/>
<keyword id="KW-1185">Reference proteome</keyword>
<keyword id="KW-0687">Ribonucleoprotein</keyword>
<keyword id="KW-0689">Ribosomal protein</keyword>
<keyword id="KW-0694">RNA-binding</keyword>
<keyword id="KW-0699">rRNA-binding</keyword>
<organism>
    <name type="scientific">Staphylococcus carnosus (strain TM300)</name>
    <dbReference type="NCBI Taxonomy" id="396513"/>
    <lineage>
        <taxon>Bacteria</taxon>
        <taxon>Bacillati</taxon>
        <taxon>Bacillota</taxon>
        <taxon>Bacilli</taxon>
        <taxon>Bacillales</taxon>
        <taxon>Staphylococcaceae</taxon>
        <taxon>Staphylococcus</taxon>
    </lineage>
</organism>
<accession>B9DM30</accession>
<name>RS5_STACT</name>
<evidence type="ECO:0000255" key="1">
    <source>
        <dbReference type="HAMAP-Rule" id="MF_01307"/>
    </source>
</evidence>
<evidence type="ECO:0000305" key="2"/>
<dbReference type="EMBL" id="AM295250">
    <property type="protein sequence ID" value="CAL28624.1"/>
    <property type="molecule type" value="Genomic_DNA"/>
</dbReference>
<dbReference type="RefSeq" id="WP_015900962.1">
    <property type="nucleotide sequence ID" value="NC_012121.1"/>
</dbReference>
<dbReference type="SMR" id="B9DM30"/>
<dbReference type="GeneID" id="93794177"/>
<dbReference type="KEGG" id="sca:SCA_1718"/>
<dbReference type="eggNOG" id="COG0098">
    <property type="taxonomic scope" value="Bacteria"/>
</dbReference>
<dbReference type="HOGENOM" id="CLU_065898_2_2_9"/>
<dbReference type="OrthoDB" id="9809045at2"/>
<dbReference type="BioCyc" id="SCAR396513:SCA_RS08755-MONOMER"/>
<dbReference type="Proteomes" id="UP000000444">
    <property type="component" value="Chromosome"/>
</dbReference>
<dbReference type="GO" id="GO:0015935">
    <property type="term" value="C:small ribosomal subunit"/>
    <property type="evidence" value="ECO:0007669"/>
    <property type="project" value="InterPro"/>
</dbReference>
<dbReference type="GO" id="GO:0019843">
    <property type="term" value="F:rRNA binding"/>
    <property type="evidence" value="ECO:0007669"/>
    <property type="project" value="UniProtKB-UniRule"/>
</dbReference>
<dbReference type="GO" id="GO:0003735">
    <property type="term" value="F:structural constituent of ribosome"/>
    <property type="evidence" value="ECO:0007669"/>
    <property type="project" value="InterPro"/>
</dbReference>
<dbReference type="GO" id="GO:0006412">
    <property type="term" value="P:translation"/>
    <property type="evidence" value="ECO:0007669"/>
    <property type="project" value="UniProtKB-UniRule"/>
</dbReference>
<dbReference type="FunFam" id="3.30.160.20:FF:000001">
    <property type="entry name" value="30S ribosomal protein S5"/>
    <property type="match status" value="1"/>
</dbReference>
<dbReference type="FunFam" id="3.30.230.10:FF:000002">
    <property type="entry name" value="30S ribosomal protein S5"/>
    <property type="match status" value="1"/>
</dbReference>
<dbReference type="Gene3D" id="3.30.160.20">
    <property type="match status" value="1"/>
</dbReference>
<dbReference type="Gene3D" id="3.30.230.10">
    <property type="match status" value="1"/>
</dbReference>
<dbReference type="HAMAP" id="MF_01307_B">
    <property type="entry name" value="Ribosomal_uS5_B"/>
    <property type="match status" value="1"/>
</dbReference>
<dbReference type="InterPro" id="IPR020568">
    <property type="entry name" value="Ribosomal_Su5_D2-typ_SF"/>
</dbReference>
<dbReference type="InterPro" id="IPR000851">
    <property type="entry name" value="Ribosomal_uS5"/>
</dbReference>
<dbReference type="InterPro" id="IPR005712">
    <property type="entry name" value="Ribosomal_uS5_bac-type"/>
</dbReference>
<dbReference type="InterPro" id="IPR005324">
    <property type="entry name" value="Ribosomal_uS5_C"/>
</dbReference>
<dbReference type="InterPro" id="IPR013810">
    <property type="entry name" value="Ribosomal_uS5_N"/>
</dbReference>
<dbReference type="InterPro" id="IPR018192">
    <property type="entry name" value="Ribosomal_uS5_N_CS"/>
</dbReference>
<dbReference type="InterPro" id="IPR014721">
    <property type="entry name" value="Ribsml_uS5_D2-typ_fold_subgr"/>
</dbReference>
<dbReference type="NCBIfam" id="TIGR01021">
    <property type="entry name" value="rpsE_bact"/>
    <property type="match status" value="1"/>
</dbReference>
<dbReference type="PANTHER" id="PTHR48277">
    <property type="entry name" value="MITOCHONDRIAL RIBOSOMAL PROTEIN S5"/>
    <property type="match status" value="1"/>
</dbReference>
<dbReference type="PANTHER" id="PTHR48277:SF1">
    <property type="entry name" value="MITOCHONDRIAL RIBOSOMAL PROTEIN S5"/>
    <property type="match status" value="1"/>
</dbReference>
<dbReference type="Pfam" id="PF00333">
    <property type="entry name" value="Ribosomal_S5"/>
    <property type="match status" value="1"/>
</dbReference>
<dbReference type="Pfam" id="PF03719">
    <property type="entry name" value="Ribosomal_S5_C"/>
    <property type="match status" value="1"/>
</dbReference>
<dbReference type="SUPFAM" id="SSF54768">
    <property type="entry name" value="dsRNA-binding domain-like"/>
    <property type="match status" value="1"/>
</dbReference>
<dbReference type="SUPFAM" id="SSF54211">
    <property type="entry name" value="Ribosomal protein S5 domain 2-like"/>
    <property type="match status" value="1"/>
</dbReference>
<dbReference type="PROSITE" id="PS00585">
    <property type="entry name" value="RIBOSOMAL_S5"/>
    <property type="match status" value="1"/>
</dbReference>
<dbReference type="PROSITE" id="PS50881">
    <property type="entry name" value="S5_DSRBD"/>
    <property type="match status" value="1"/>
</dbReference>
<comment type="function">
    <text evidence="1">With S4 and S12 plays an important role in translational accuracy.</text>
</comment>
<comment type="function">
    <text evidence="1">Located at the back of the 30S subunit body where it stabilizes the conformation of the head with respect to the body.</text>
</comment>
<comment type="subunit">
    <text evidence="1">Part of the 30S ribosomal subunit. Contacts proteins S4 and S8.</text>
</comment>
<comment type="domain">
    <text>The N-terminal domain interacts with the head of the 30S subunit; the C-terminal domain interacts with the body and contacts protein S4. The interaction surface between S4 and S5 is involved in control of translational fidelity.</text>
</comment>
<comment type="similarity">
    <text evidence="1">Belongs to the universal ribosomal protein uS5 family.</text>
</comment>
<sequence length="166" mass="17663">MARRDEEAKEFEERVVTINRVAKVVKGGRRFRFTALVVVGDKKGRVGFGTGKAQEVPEAIKKAVEAAKKDLVTVNRVEGTTPHTITGRFGSGSVLLKPAAPGTGVIAGGPVRAVLELAGITDILSKSLGSNTPINMVRATLNGLENLKNAEEVAKLRGKSVEELYN</sequence>
<feature type="chain" id="PRO_1000165465" description="Small ribosomal subunit protein uS5">
    <location>
        <begin position="1"/>
        <end position="166"/>
    </location>
</feature>
<feature type="domain" description="S5 DRBM" evidence="1">
    <location>
        <begin position="11"/>
        <end position="74"/>
    </location>
</feature>
<protein>
    <recommendedName>
        <fullName evidence="1">Small ribosomal subunit protein uS5</fullName>
    </recommendedName>
    <alternativeName>
        <fullName evidence="2">30S ribosomal protein S5</fullName>
    </alternativeName>
</protein>
<reference key="1">
    <citation type="journal article" date="2009" name="Appl. Environ. Microbiol.">
        <title>Genome analysis of the meat starter culture bacterium Staphylococcus carnosus TM300.</title>
        <authorList>
            <person name="Rosenstein R."/>
            <person name="Nerz C."/>
            <person name="Biswas L."/>
            <person name="Resch A."/>
            <person name="Raddatz G."/>
            <person name="Schuster S.C."/>
            <person name="Goetz F."/>
        </authorList>
    </citation>
    <scope>NUCLEOTIDE SEQUENCE [LARGE SCALE GENOMIC DNA]</scope>
    <source>
        <strain>TM300</strain>
    </source>
</reference>
<gene>
    <name evidence="1" type="primary">rpsE</name>
    <name type="ordered locus">Sca_1718</name>
</gene>